<accession>A0A0E0SP71</accession>
<keyword id="KW-0256">Endoplasmic reticulum</keyword>
<keyword id="KW-0413">Isomerase</keyword>
<keyword id="KW-0444">Lipid biosynthesis</keyword>
<keyword id="KW-0551">Lipid droplet</keyword>
<keyword id="KW-0443">Lipid metabolism</keyword>
<keyword id="KW-0472">Membrane</keyword>
<keyword id="KW-1185">Reference proteome</keyword>
<keyword id="KW-0677">Repeat</keyword>
<keyword id="KW-0752">Steroid biosynthesis</keyword>
<keyword id="KW-0753">Steroid metabolism</keyword>
<keyword id="KW-0756">Sterol biosynthesis</keyword>
<keyword id="KW-1207">Sterol metabolism</keyword>
<protein>
    <recommendedName>
        <fullName evidence="7">Lanosterol synthase ERG7</fullName>
        <ecNumber evidence="1">5.4.99.7</ecNumber>
    </recommendedName>
    <alternativeName>
        <fullName evidence="1">Ergosterol biosynthetic protein 7</fullName>
    </alternativeName>
    <alternativeName>
        <fullName evidence="7">Lanosterol cyclase ERG7</fullName>
    </alternativeName>
    <alternativeName>
        <fullName evidence="1">Oxidosqualene--lanosterol cyclase ERG7</fullName>
        <shortName evidence="1">OSC</shortName>
    </alternativeName>
</protein>
<reference key="1">
    <citation type="journal article" date="2007" name="Science">
        <title>The Fusarium graminearum genome reveals a link between localized polymorphism and pathogen specialization.</title>
        <authorList>
            <person name="Cuomo C.A."/>
            <person name="Gueldener U."/>
            <person name="Xu J.-R."/>
            <person name="Trail F."/>
            <person name="Turgeon B.G."/>
            <person name="Di Pietro A."/>
            <person name="Walton J.D."/>
            <person name="Ma L.-J."/>
            <person name="Baker S.E."/>
            <person name="Rep M."/>
            <person name="Adam G."/>
            <person name="Antoniw J."/>
            <person name="Baldwin T."/>
            <person name="Calvo S.E."/>
            <person name="Chang Y.-L."/>
            <person name="DeCaprio D."/>
            <person name="Gale L.R."/>
            <person name="Gnerre S."/>
            <person name="Goswami R.S."/>
            <person name="Hammond-Kosack K."/>
            <person name="Harris L.J."/>
            <person name="Hilburn K."/>
            <person name="Kennell J.C."/>
            <person name="Kroken S."/>
            <person name="Magnuson J.K."/>
            <person name="Mannhaupt G."/>
            <person name="Mauceli E.W."/>
            <person name="Mewes H.-W."/>
            <person name="Mitterbauer R."/>
            <person name="Muehlbauer G."/>
            <person name="Muensterkoetter M."/>
            <person name="Nelson D."/>
            <person name="O'Donnell K."/>
            <person name="Ouellet T."/>
            <person name="Qi W."/>
            <person name="Quesneville H."/>
            <person name="Roncero M.I.G."/>
            <person name="Seong K.-Y."/>
            <person name="Tetko I.V."/>
            <person name="Urban M."/>
            <person name="Waalwijk C."/>
            <person name="Ward T.J."/>
            <person name="Yao J."/>
            <person name="Birren B.W."/>
            <person name="Kistler H.C."/>
        </authorList>
    </citation>
    <scope>NUCLEOTIDE SEQUENCE [LARGE SCALE GENOMIC DNA]</scope>
    <source>
        <strain>ATCC MYA-4620 / CBS 123657 / FGSC 9075 / NRRL 31084 / PH-1</strain>
    </source>
</reference>
<reference key="2">
    <citation type="journal article" date="2010" name="Nature">
        <title>Comparative genomics reveals mobile pathogenicity chromosomes in Fusarium.</title>
        <authorList>
            <person name="Ma L.-J."/>
            <person name="van der Does H.C."/>
            <person name="Borkovich K.A."/>
            <person name="Coleman J.J."/>
            <person name="Daboussi M.-J."/>
            <person name="Di Pietro A."/>
            <person name="Dufresne M."/>
            <person name="Freitag M."/>
            <person name="Grabherr M."/>
            <person name="Henrissat B."/>
            <person name="Houterman P.M."/>
            <person name="Kang S."/>
            <person name="Shim W.-B."/>
            <person name="Woloshuk C."/>
            <person name="Xie X."/>
            <person name="Xu J.-R."/>
            <person name="Antoniw J."/>
            <person name="Baker S.E."/>
            <person name="Bluhm B.H."/>
            <person name="Breakspear A."/>
            <person name="Brown D.W."/>
            <person name="Butchko R.A.E."/>
            <person name="Chapman S."/>
            <person name="Coulson R."/>
            <person name="Coutinho P.M."/>
            <person name="Danchin E.G.J."/>
            <person name="Diener A."/>
            <person name="Gale L.R."/>
            <person name="Gardiner D.M."/>
            <person name="Goff S."/>
            <person name="Hammond-Kosack K.E."/>
            <person name="Hilburn K."/>
            <person name="Hua-Van A."/>
            <person name="Jonkers W."/>
            <person name="Kazan K."/>
            <person name="Kodira C.D."/>
            <person name="Koehrsen M."/>
            <person name="Kumar L."/>
            <person name="Lee Y.-H."/>
            <person name="Li L."/>
            <person name="Manners J.M."/>
            <person name="Miranda-Saavedra D."/>
            <person name="Mukherjee M."/>
            <person name="Park G."/>
            <person name="Park J."/>
            <person name="Park S.-Y."/>
            <person name="Proctor R.H."/>
            <person name="Regev A."/>
            <person name="Ruiz-Roldan M.C."/>
            <person name="Sain D."/>
            <person name="Sakthikumar S."/>
            <person name="Sykes S."/>
            <person name="Schwartz D.C."/>
            <person name="Turgeon B.G."/>
            <person name="Wapinski I."/>
            <person name="Yoder O."/>
            <person name="Young S."/>
            <person name="Zeng Q."/>
            <person name="Zhou S."/>
            <person name="Galagan J."/>
            <person name="Cuomo C.A."/>
            <person name="Kistler H.C."/>
            <person name="Rep M."/>
        </authorList>
    </citation>
    <scope>GENOME REANNOTATION</scope>
    <source>
        <strain>ATCC MYA-4620 / CBS 123657 / FGSC 9075 / NRRL 31084 / PH-1</strain>
    </source>
</reference>
<reference key="3">
    <citation type="journal article" date="2015" name="BMC Genomics">
        <title>The completed genome sequence of the pathogenic ascomycete fungus Fusarium graminearum.</title>
        <authorList>
            <person name="King R."/>
            <person name="Urban M."/>
            <person name="Hammond-Kosack M.C.U."/>
            <person name="Hassani-Pak K."/>
            <person name="Hammond-Kosack K.E."/>
        </authorList>
    </citation>
    <scope>NUCLEOTIDE SEQUENCE [LARGE SCALE GENOMIC DNA]</scope>
    <source>
        <strain>ATCC MYA-4620 / CBS 123657 / FGSC 9075 / NRRL 31084 / PH-1</strain>
    </source>
</reference>
<reference key="4">
    <citation type="journal article" date="2013" name="Mol. Plant Pathol.">
        <title>Involvement of FgERG4 in ergosterol biosynthesis, vegetative differentiation and virulence in Fusarium graminearum.</title>
        <authorList>
            <person name="Liu X."/>
            <person name="Jiang J."/>
            <person name="Yin Y."/>
            <person name="Ma Z."/>
        </authorList>
    </citation>
    <scope>INDUCTION</scope>
</reference>
<reference key="5">
    <citation type="journal article" date="2013" name="New Phytol.">
        <title>Characterization of the sterol 14alpha-demethylases of Fusarium graminearum identifies a novel genus-specific CYP51 function.</title>
        <authorList>
            <person name="Fan J."/>
            <person name="Urban M."/>
            <person name="Parker J.E."/>
            <person name="Brewer H.C."/>
            <person name="Kelly S.L."/>
            <person name="Hammond-Kosack K.E."/>
            <person name="Fraaije B.A."/>
            <person name="Liu X."/>
            <person name="Cools H.J."/>
        </authorList>
    </citation>
    <scope>FUNCTION</scope>
    <scope>INDUCTION</scope>
    <scope>PATHWAY</scope>
</reference>
<name>ERG7_GIBZE</name>
<comment type="function">
    <text evidence="1 9">Lanosterol synthase; part of the third module of ergosterol biosynthesis pathway that includes the late steps of the pathway (By similarity). ERG7 catalyzes the cyclization of (S)-2,3 oxidosqualene to lanosterol, a reaction that forms the sterol core (By similarity). The third module or late pathway involves the ergosterol synthesis itself through consecutive reactions that mainly occur in the endoplasmic reticulum (ER) membrane. Firstly, the squalene synthase ERG9 catalyzes the condensation of 2 farnesyl pyrophosphate moieties to form squalene, which is the precursor of all steroids. Squalene synthase is crucial for balancing the incorporation of farnesyl diphosphate (FPP) into sterol and nonsterol isoprene synthesis. Secondly, squalene is converted into lanosterol by the consecutive action of the squalene epoxidase ERG1 and the lanosterol synthase ERG7. Then, the delta(24)-sterol C-methyltransferase ERG6 methylates lanosterol at C-24 to produce eburicol. Eburicol is the substrate of the sterol 14-alpha demethylase encoded by CYP51A, CYP51B and CYP51C, to yield 4,4,24-trimethyl ergosta-8,14,24(28)-trienol. CYP51B encodes the enzyme primarily responsible for sterol 14-alpha-demethylation, and plays an essential role in ascospore formation. CYP51A encodes an additional sterol 14-alpha-demethylase, induced on ergosterol depletion and responsible for the intrinsic variation in azole sensitivity. The third CYP51 isoform, CYP51C, does not encode a sterol 14-alpha-demethylase, but is required for full virulence on host wheat ears. The C-14 reductase ERG24 then reduces the C14=C15 double bond which leads to 4,4-dimethylfecosterol. A sequence of further demethylations at C-4, involving the C-4 demethylation complex containing the C-4 methylsterol oxidases ERG25, the sterol-4-alpha-carboxylate 3-dehydrogenase ERG26 and the 3-keto-steroid reductase ERG27, leads to the production of fecosterol via 4-methylfecosterol. ERG28 has a role as a scaffold to help anchor ERG25, ERG26 and ERG27 to the endoplasmic reticulum. The C-8 sterol isomerase ERG2 then catalyzes the reaction which results in unsaturation at C-7 in the B ring of sterols and thus converts fecosterol to episterol. The sterol-C5-desaturases ERG3A and ERG3BB then catalyze the introduction of a C-5 double bond in the B ring to produce 5-dehydroepisterol. The C-22 sterol desaturases ERG5A and ERG5B further convert 5-dehydroepisterol into ergosta-5,7,22,24(28)-tetraen-3beta-ol by forming the C-22(23) double bond in the sterol side chain. Finally, ergosta-5,7,22,24(28)-tetraen-3beta-ol is substrate of the C-24(28) sterol reductase ERG4 to produce ergosterol (Probable).</text>
</comment>
<comment type="catalytic activity">
    <reaction evidence="1">
        <text>(S)-2,3-epoxysqualene = lanosterol</text>
        <dbReference type="Rhea" id="RHEA:14621"/>
        <dbReference type="ChEBI" id="CHEBI:15441"/>
        <dbReference type="ChEBI" id="CHEBI:16521"/>
        <dbReference type="EC" id="5.4.99.7"/>
    </reaction>
    <physiologicalReaction direction="left-to-right" evidence="1">
        <dbReference type="Rhea" id="RHEA:14622"/>
    </physiologicalReaction>
</comment>
<comment type="pathway">
    <text evidence="9">Terpene metabolism; lanosterol biosynthesis; lanosterol from farnesyl diphosphate: step 3/3.</text>
</comment>
<comment type="pathway">
    <text evidence="9">Steroid metabolism; ergosterol biosynthesis.</text>
</comment>
<comment type="subcellular location">
    <subcellularLocation>
        <location evidence="1">Lipid droplet</location>
    </subcellularLocation>
    <subcellularLocation>
        <location evidence="1">Endoplasmic reticulum membrane</location>
        <topology evidence="1">Peripheral membrane protein</topology>
    </subcellularLocation>
    <text evidence="1">Predominantly in lipid particles.</text>
</comment>
<comment type="induction">
    <text evidence="5 6">Expression is increased in the absence of the C-24(28) sterol reductase ERG4 (PubMed:22947191). Expression is also significantly higher when CYP51A is deleted or in the CYP51B/CYP51C double deletant (PubMed:23442154).</text>
</comment>
<comment type="miscellaneous">
    <text evidence="6">In Fusarium, the biosynthesis pathway of the sterol precursors leading to the prevalent sterol ergosterol differs from yeast. The ringsystem of lanosterol in S.cerevisiae is firstly demethylised in three enzymatic steps leading to the intermediate zymosterol and secondly a methyl group is added to zymosterol by the sterol 24-C-methyltransferase to form fecosterol. In Fusarium, lanosterol is firstly transmethylated by the sterol 24-C-methyltransferase leading to the intermediate eburicol and secondly demethylated in three steps to form fecosterol.</text>
</comment>
<comment type="similarity">
    <text evidence="8">Belongs to the terpene cyclase/mutase family.</text>
</comment>
<organism>
    <name type="scientific">Gibberella zeae (strain ATCC MYA-4620 / CBS 123657 / FGSC 9075 / NRRL 31084 / PH-1)</name>
    <name type="common">Wheat head blight fungus</name>
    <name type="synonym">Fusarium graminearum</name>
    <dbReference type="NCBI Taxonomy" id="229533"/>
    <lineage>
        <taxon>Eukaryota</taxon>
        <taxon>Fungi</taxon>
        <taxon>Dikarya</taxon>
        <taxon>Ascomycota</taxon>
        <taxon>Pezizomycotina</taxon>
        <taxon>Sordariomycetes</taxon>
        <taxon>Hypocreomycetidae</taxon>
        <taxon>Hypocreales</taxon>
        <taxon>Nectriaceae</taxon>
        <taxon>Fusarium</taxon>
    </lineage>
</organism>
<proteinExistence type="evidence at transcript level"/>
<sequence>MVANSTGRDASALKSRKRAADSESEPLLKQGQPFPKQPRIGSELDKTRWRLKDDDSRHTWHYLEDDDAAKEWPQSYAEKWYLNQSLDLPDLPSPDSPLAAATNGLDFFEKLQLPSGHWGCEYGGPMFLLPSVVITWYVTRTPISPSKATAIYNYISARAHPEDGGWGLHIEGESSVFGTLMNYVALRLVGVEADDPVLVKARGTLHKMGGALYAPHWAKFWMGVLGVMDWDVVNPVPPEIWLLPDWVPFAPWRWWIHIRMVFLPMGWLYSKRWSCEETDVIRSLRKEVFIEDYAKIKWTSHRNDIGVVDNYHPKSWLLNTANWLIVNIWNPYLRPNVLKEKAEAWSSKQVDMEDANTDYACLAPVNATMNTVMCYARDGPDNYGVQRHIERLEEFLWVKDEGMLVNGTNGVQCWDTAFLIQAVFEAGLHKDEKWKPMLMKSLQYLERQQIREDCVDQDVCYRQPRKGGWPFSNKDQGYGVSDCISEAMKAIILLQKVGGLPEVLEERRLFDAVDTLLLYQNSNGGMSSYEKRRGGEWLEMLNAAEVFGRIMIEYDYPECTTACVTALSLFNKYWPDYRTKEVKTLIRTAAEWIKSNQRPDGGWYGSWGICFTYAGMFALESMKHIGQTYATGENSRRGCDFLISKQRADGGWSESYKACETMEYVEHPSGSLVVQTAWALIGLMEADYPHVEPLKRGIQLIMDRQQPNGEWLQEAIEGVFNKSCMISYPNYKFTFTIKALGMFAKRFPEEKLVPSWALQGNGIEKS</sequence>
<gene>
    <name evidence="7" type="primary">ERG7</name>
    <name type="ORF">FG05950</name>
    <name type="ORF">FGRAMPH1_01T19145</name>
</gene>
<dbReference type="EC" id="5.4.99.7" evidence="1"/>
<dbReference type="EMBL" id="HG970334">
    <property type="protein sequence ID" value="CEF88234.1"/>
    <property type="molecule type" value="Genomic_DNA"/>
</dbReference>
<dbReference type="SMR" id="A0A0E0SP71"/>
<dbReference type="FunCoup" id="A0A0E0SP71">
    <property type="interactions" value="125"/>
</dbReference>
<dbReference type="STRING" id="229533.A0A0E0SP71"/>
<dbReference type="VEuPathDB" id="FungiDB:FGRAMPH1_01G19145"/>
<dbReference type="eggNOG" id="KOG0497">
    <property type="taxonomic scope" value="Eukaryota"/>
</dbReference>
<dbReference type="InParanoid" id="A0A0E0SP71"/>
<dbReference type="UniPathway" id="UPA00767">
    <property type="reaction ID" value="UER00753"/>
</dbReference>
<dbReference type="UniPathway" id="UPA00768"/>
<dbReference type="Proteomes" id="UP000070720">
    <property type="component" value="Chromosome 3"/>
</dbReference>
<dbReference type="GO" id="GO:0005789">
    <property type="term" value="C:endoplasmic reticulum membrane"/>
    <property type="evidence" value="ECO:0007669"/>
    <property type="project" value="UniProtKB-SubCell"/>
</dbReference>
<dbReference type="GO" id="GO:0005811">
    <property type="term" value="C:lipid droplet"/>
    <property type="evidence" value="ECO:0007669"/>
    <property type="project" value="UniProtKB-SubCell"/>
</dbReference>
<dbReference type="GO" id="GO:0000250">
    <property type="term" value="F:lanosterol synthase activity"/>
    <property type="evidence" value="ECO:0007669"/>
    <property type="project" value="TreeGrafter"/>
</dbReference>
<dbReference type="GO" id="GO:0006696">
    <property type="term" value="P:ergosterol biosynthetic process"/>
    <property type="evidence" value="ECO:0007669"/>
    <property type="project" value="TreeGrafter"/>
</dbReference>
<dbReference type="GO" id="GO:0016104">
    <property type="term" value="P:triterpenoid biosynthetic process"/>
    <property type="evidence" value="ECO:0007669"/>
    <property type="project" value="InterPro"/>
</dbReference>
<dbReference type="CDD" id="cd02892">
    <property type="entry name" value="SQCY_1"/>
    <property type="match status" value="1"/>
</dbReference>
<dbReference type="FunFam" id="1.50.10.20:FF:000003">
    <property type="entry name" value="Terpene cyclase/mutase family member"/>
    <property type="match status" value="1"/>
</dbReference>
<dbReference type="Gene3D" id="1.50.10.20">
    <property type="match status" value="2"/>
</dbReference>
<dbReference type="Gene3D" id="6.20.120.20">
    <property type="match status" value="1"/>
</dbReference>
<dbReference type="InterPro" id="IPR032696">
    <property type="entry name" value="SQ_cyclase_C"/>
</dbReference>
<dbReference type="InterPro" id="IPR032697">
    <property type="entry name" value="SQ_cyclase_N"/>
</dbReference>
<dbReference type="InterPro" id="IPR018333">
    <property type="entry name" value="Squalene_cyclase"/>
</dbReference>
<dbReference type="InterPro" id="IPR008930">
    <property type="entry name" value="Terpenoid_cyclase/PrenylTrfase"/>
</dbReference>
<dbReference type="NCBIfam" id="TIGR01787">
    <property type="entry name" value="squalene_cyclas"/>
    <property type="match status" value="1"/>
</dbReference>
<dbReference type="PANTHER" id="PTHR11764:SF20">
    <property type="entry name" value="LANOSTEROL SYNTHASE"/>
    <property type="match status" value="1"/>
</dbReference>
<dbReference type="PANTHER" id="PTHR11764">
    <property type="entry name" value="TERPENE CYCLASE/MUTASE FAMILY MEMBER"/>
    <property type="match status" value="1"/>
</dbReference>
<dbReference type="Pfam" id="PF13243">
    <property type="entry name" value="SQHop_cyclase_C"/>
    <property type="match status" value="1"/>
</dbReference>
<dbReference type="Pfam" id="PF13249">
    <property type="entry name" value="SQHop_cyclase_N"/>
    <property type="match status" value="1"/>
</dbReference>
<dbReference type="SFLD" id="SFLDG01016">
    <property type="entry name" value="Prenyltransferase_Like_2"/>
    <property type="match status" value="1"/>
</dbReference>
<dbReference type="SUPFAM" id="SSF48239">
    <property type="entry name" value="Terpenoid cyclases/Protein prenyltransferases"/>
    <property type="match status" value="2"/>
</dbReference>
<evidence type="ECO:0000250" key="1">
    <source>
        <dbReference type="UniProtKB" id="P38604"/>
    </source>
</evidence>
<evidence type="ECO:0000250" key="2">
    <source>
        <dbReference type="UniProtKB" id="P48449"/>
    </source>
</evidence>
<evidence type="ECO:0000255" key="3"/>
<evidence type="ECO:0000256" key="4">
    <source>
        <dbReference type="SAM" id="MobiDB-lite"/>
    </source>
</evidence>
<evidence type="ECO:0000269" key="5">
    <source>
    </source>
</evidence>
<evidence type="ECO:0000269" key="6">
    <source>
    </source>
</evidence>
<evidence type="ECO:0000303" key="7">
    <source>
    </source>
</evidence>
<evidence type="ECO:0000305" key="8"/>
<evidence type="ECO:0000305" key="9">
    <source>
    </source>
</evidence>
<feature type="chain" id="PRO_0000454352" description="Lanosterol synthase ERG7">
    <location>
        <begin position="1"/>
        <end position="766"/>
    </location>
</feature>
<feature type="repeat" description="PFTB 1" evidence="3">
    <location>
        <begin position="148"/>
        <end position="190"/>
    </location>
</feature>
<feature type="repeat" description="PFTB 2" evidence="3">
    <location>
        <begin position="586"/>
        <end position="626"/>
    </location>
</feature>
<feature type="repeat" description="PFTB 3" evidence="3">
    <location>
        <begin position="635"/>
        <end position="676"/>
    </location>
</feature>
<feature type="region of interest" description="Disordered" evidence="4">
    <location>
        <begin position="1"/>
        <end position="47"/>
    </location>
</feature>
<feature type="active site" description="Proton donor" evidence="2">
    <location>
        <position position="482"/>
    </location>
</feature>